<organism>
    <name type="scientific">Agrobacterium fabrum (strain C58 / ATCC 33970)</name>
    <name type="common">Agrobacterium tumefaciens (strain C58)</name>
    <dbReference type="NCBI Taxonomy" id="176299"/>
    <lineage>
        <taxon>Bacteria</taxon>
        <taxon>Pseudomonadati</taxon>
        <taxon>Pseudomonadota</taxon>
        <taxon>Alphaproteobacteria</taxon>
        <taxon>Hyphomicrobiales</taxon>
        <taxon>Rhizobiaceae</taxon>
        <taxon>Rhizobium/Agrobacterium group</taxon>
        <taxon>Agrobacterium</taxon>
        <taxon>Agrobacterium tumefaciens complex</taxon>
    </lineage>
</organism>
<reference key="1">
    <citation type="journal article" date="1999" name="Microbiology">
        <title>Agrobacterium tumefaciens possesses a fourth flagelin gene located in a large gene cluster concerned with flagellar structure, assembly and motility.</title>
        <authorList>
            <person name="Deakin W.J."/>
            <person name="Parker V.E."/>
            <person name="Wright E.L."/>
            <person name="Ashcroft K.J."/>
            <person name="Loake G.J."/>
            <person name="Shaw C.H."/>
        </authorList>
    </citation>
    <scope>NUCLEOTIDE SEQUENCE [GENOMIC DNA]</scope>
</reference>
<reference key="2">
    <citation type="journal article" date="2001" name="Science">
        <title>The genome of the natural genetic engineer Agrobacterium tumefaciens C58.</title>
        <authorList>
            <person name="Wood D.W."/>
            <person name="Setubal J.C."/>
            <person name="Kaul R."/>
            <person name="Monks D.E."/>
            <person name="Kitajima J.P."/>
            <person name="Okura V.K."/>
            <person name="Zhou Y."/>
            <person name="Chen L."/>
            <person name="Wood G.E."/>
            <person name="Almeida N.F. Jr."/>
            <person name="Woo L."/>
            <person name="Chen Y."/>
            <person name="Paulsen I.T."/>
            <person name="Eisen J.A."/>
            <person name="Karp P.D."/>
            <person name="Bovee D. Sr."/>
            <person name="Chapman P."/>
            <person name="Clendenning J."/>
            <person name="Deatherage G."/>
            <person name="Gillet W."/>
            <person name="Grant C."/>
            <person name="Kutyavin T."/>
            <person name="Levy R."/>
            <person name="Li M.-J."/>
            <person name="McClelland E."/>
            <person name="Palmieri A."/>
            <person name="Raymond C."/>
            <person name="Rouse G."/>
            <person name="Saenphimmachak C."/>
            <person name="Wu Z."/>
            <person name="Romero P."/>
            <person name="Gordon D."/>
            <person name="Zhang S."/>
            <person name="Yoo H."/>
            <person name="Tao Y."/>
            <person name="Biddle P."/>
            <person name="Jung M."/>
            <person name="Krespan W."/>
            <person name="Perry M."/>
            <person name="Gordon-Kamm B."/>
            <person name="Liao L."/>
            <person name="Kim S."/>
            <person name="Hendrick C."/>
            <person name="Zhao Z.-Y."/>
            <person name="Dolan M."/>
            <person name="Chumley F."/>
            <person name="Tingey S.V."/>
            <person name="Tomb J.-F."/>
            <person name="Gordon M.P."/>
            <person name="Olson M.V."/>
            <person name="Nester E.W."/>
        </authorList>
    </citation>
    <scope>NUCLEOTIDE SEQUENCE [LARGE SCALE GENOMIC DNA]</scope>
    <source>
        <strain>C58 / ATCC 33970</strain>
    </source>
</reference>
<reference key="3">
    <citation type="journal article" date="2001" name="Science">
        <title>Genome sequence of the plant pathogen and biotechnology agent Agrobacterium tumefaciens C58.</title>
        <authorList>
            <person name="Goodner B."/>
            <person name="Hinkle G."/>
            <person name="Gattung S."/>
            <person name="Miller N."/>
            <person name="Blanchard M."/>
            <person name="Qurollo B."/>
            <person name="Goldman B.S."/>
            <person name="Cao Y."/>
            <person name="Askenazi M."/>
            <person name="Halling C."/>
            <person name="Mullin L."/>
            <person name="Houmiel K."/>
            <person name="Gordon J."/>
            <person name="Vaudin M."/>
            <person name="Iartchouk O."/>
            <person name="Epp A."/>
            <person name="Liu F."/>
            <person name="Wollam C."/>
            <person name="Allinger M."/>
            <person name="Doughty D."/>
            <person name="Scott C."/>
            <person name="Lappas C."/>
            <person name="Markelz B."/>
            <person name="Flanagan C."/>
            <person name="Crowell C."/>
            <person name="Gurson J."/>
            <person name="Lomo C."/>
            <person name="Sear C."/>
            <person name="Strub G."/>
            <person name="Cielo C."/>
            <person name="Slater S."/>
        </authorList>
    </citation>
    <scope>NUCLEOTIDE SEQUENCE [LARGE SCALE GENOMIC DNA]</scope>
    <source>
        <strain>C58 / ATCC 33970</strain>
    </source>
</reference>
<dbReference type="EMBL" id="U95165">
    <property type="protein sequence ID" value="AAB71777.1"/>
    <property type="molecule type" value="Genomic_DNA"/>
</dbReference>
<dbReference type="EMBL" id="AE007869">
    <property type="protein sequence ID" value="AAK86377.1"/>
    <property type="molecule type" value="Genomic_DNA"/>
</dbReference>
<dbReference type="PIR" id="AH2645">
    <property type="entry name" value="AH2645"/>
</dbReference>
<dbReference type="PIR" id="H97427">
    <property type="entry name" value="H97427"/>
</dbReference>
<dbReference type="RefSeq" id="NP_353592.1">
    <property type="nucleotide sequence ID" value="NC_003062.2"/>
</dbReference>
<dbReference type="RefSeq" id="WP_006313030.1">
    <property type="nucleotide sequence ID" value="NC_003062.2"/>
</dbReference>
<dbReference type="STRING" id="176299.Atu0565"/>
<dbReference type="EnsemblBacteria" id="AAK86377">
    <property type="protein sequence ID" value="AAK86377"/>
    <property type="gene ID" value="Atu0565"/>
</dbReference>
<dbReference type="GeneID" id="1132603"/>
<dbReference type="KEGG" id="atu:Atu0565"/>
<dbReference type="PATRIC" id="fig|176299.10.peg.561"/>
<dbReference type="eggNOG" id="ENOG5032UF1">
    <property type="taxonomic scope" value="Bacteria"/>
</dbReference>
<dbReference type="HOGENOM" id="CLU_129708_0_0_5"/>
<dbReference type="OrthoDB" id="7862614at2"/>
<dbReference type="Proteomes" id="UP000000813">
    <property type="component" value="Chromosome circular"/>
</dbReference>
<dbReference type="InterPro" id="IPR017024">
    <property type="entry name" value="UCP034217"/>
</dbReference>
<dbReference type="PIRSF" id="PIRSF034217">
    <property type="entry name" value="UCP034217_Mll2898"/>
    <property type="match status" value="1"/>
</dbReference>
<protein>
    <recommendedName>
        <fullName>Uncharacterized protein Atu0565</fullName>
    </recommendedName>
</protein>
<proteinExistence type="predicted"/>
<evidence type="ECO:0000305" key="1"/>
<sequence length="145" mass="16025">MKKSAYSEQREMIVAEAINPIATELRLLDPADLISLLRFECYGSIADLVSSAAELYYHPGTINFGAGGEYKLEWEGVPEIVLDLELKPKGATVYARLILADRHAAVEINHVSFQNPSENPDENTEFLQRSLTAARFVASRQGEAA</sequence>
<keyword id="KW-1185">Reference proteome</keyword>
<comment type="similarity">
    <text evidence="1">To R.meliloti R00649.</text>
</comment>
<accession>O34167</accession>
<accession>Q7CP08</accession>
<accession>Q7D180</accession>
<name>Y565_AGRFC</name>
<feature type="chain" id="PRO_0000197034" description="Uncharacterized protein Atu0565">
    <location>
        <begin position="1"/>
        <end position="145"/>
    </location>
</feature>
<gene>
    <name type="ordered locus">Atu0565</name>
    <name type="ORF">AGR_C_992</name>
</gene>